<protein>
    <recommendedName>
        <fullName>mRNA cap guanine-N(7) methyltransferase</fullName>
        <ecNumber evidence="2">2.1.1.56</ecNumber>
    </recommendedName>
    <alternativeName>
        <fullName>mRNA (guanine-N(7))-methyltransferase</fullName>
    </alternativeName>
    <alternativeName>
        <fullName>mRNA cap methyltransferase</fullName>
    </alternativeName>
</protein>
<gene>
    <name type="primary">ABD1</name>
    <name type="ordered locus">CNBC5820</name>
</gene>
<accession>P0CO65</accession>
<accession>Q55VA2</accession>
<accession>Q5KKY2</accession>
<dbReference type="EC" id="2.1.1.56" evidence="2"/>
<dbReference type="EMBL" id="AAEY01000016">
    <property type="protein sequence ID" value="EAL21718.1"/>
    <property type="molecule type" value="Genomic_DNA"/>
</dbReference>
<dbReference type="RefSeq" id="XP_776365.1">
    <property type="nucleotide sequence ID" value="XM_771272.1"/>
</dbReference>
<dbReference type="SMR" id="P0CO65"/>
<dbReference type="GeneID" id="4935248"/>
<dbReference type="KEGG" id="cnb:CNBC5820"/>
<dbReference type="VEuPathDB" id="FungiDB:CNBC5820"/>
<dbReference type="HOGENOM" id="CLU_020346_4_0_1"/>
<dbReference type="OrthoDB" id="6600at5206"/>
<dbReference type="GO" id="GO:0005634">
    <property type="term" value="C:nucleus"/>
    <property type="evidence" value="ECO:0007669"/>
    <property type="project" value="UniProtKB-SubCell"/>
</dbReference>
<dbReference type="GO" id="GO:0004482">
    <property type="term" value="F:mRNA 5'-cap (guanine-N7-)-methyltransferase activity"/>
    <property type="evidence" value="ECO:0007669"/>
    <property type="project" value="UniProtKB-EC"/>
</dbReference>
<dbReference type="GO" id="GO:0003723">
    <property type="term" value="F:RNA binding"/>
    <property type="evidence" value="ECO:0007669"/>
    <property type="project" value="UniProtKB-KW"/>
</dbReference>
<dbReference type="CDD" id="cd02440">
    <property type="entry name" value="AdoMet_MTases"/>
    <property type="match status" value="1"/>
</dbReference>
<dbReference type="FunFam" id="3.40.50.150:FF:000412">
    <property type="entry name" value="mRNA cap guanine-N7 methyltransferase"/>
    <property type="match status" value="1"/>
</dbReference>
<dbReference type="Gene3D" id="3.40.50.150">
    <property type="entry name" value="Vaccinia Virus protein VP39"/>
    <property type="match status" value="1"/>
</dbReference>
<dbReference type="InterPro" id="IPR004971">
    <property type="entry name" value="mRNA_G-N7_MeTrfase_dom"/>
</dbReference>
<dbReference type="InterPro" id="IPR039753">
    <property type="entry name" value="RG7MT1"/>
</dbReference>
<dbReference type="InterPro" id="IPR029063">
    <property type="entry name" value="SAM-dependent_MTases_sf"/>
</dbReference>
<dbReference type="PANTHER" id="PTHR12189:SF2">
    <property type="entry name" value="MRNA CAP GUANINE-N7 METHYLTRANSFERASE"/>
    <property type="match status" value="1"/>
</dbReference>
<dbReference type="PANTHER" id="PTHR12189">
    <property type="entry name" value="MRNA GUANINE-7- METHYLTRANSFERASE"/>
    <property type="match status" value="1"/>
</dbReference>
<dbReference type="Pfam" id="PF03291">
    <property type="entry name" value="mRNA_G-N7_MeTrfase"/>
    <property type="match status" value="1"/>
</dbReference>
<dbReference type="SUPFAM" id="SSF53335">
    <property type="entry name" value="S-adenosyl-L-methionine-dependent methyltransferases"/>
    <property type="match status" value="1"/>
</dbReference>
<dbReference type="PROSITE" id="PS51562">
    <property type="entry name" value="RNA_CAP0_MT"/>
    <property type="match status" value="1"/>
</dbReference>
<proteinExistence type="inferred from homology"/>
<name>MCES_CRYNB</name>
<organism>
    <name type="scientific">Cryptococcus neoformans var. neoformans serotype D (strain B-3501A)</name>
    <name type="common">Filobasidiella neoformans</name>
    <dbReference type="NCBI Taxonomy" id="283643"/>
    <lineage>
        <taxon>Eukaryota</taxon>
        <taxon>Fungi</taxon>
        <taxon>Dikarya</taxon>
        <taxon>Basidiomycota</taxon>
        <taxon>Agaricomycotina</taxon>
        <taxon>Tremellomycetes</taxon>
        <taxon>Tremellales</taxon>
        <taxon>Cryptococcaceae</taxon>
        <taxon>Cryptococcus</taxon>
        <taxon>Cryptococcus neoformans species complex</taxon>
    </lineage>
</organism>
<reference key="1">
    <citation type="journal article" date="2005" name="Science">
        <title>The genome of the basidiomycetous yeast and human pathogen Cryptococcus neoformans.</title>
        <authorList>
            <person name="Loftus B.J."/>
            <person name="Fung E."/>
            <person name="Roncaglia P."/>
            <person name="Rowley D."/>
            <person name="Amedeo P."/>
            <person name="Bruno D."/>
            <person name="Vamathevan J."/>
            <person name="Miranda M."/>
            <person name="Anderson I.J."/>
            <person name="Fraser J.A."/>
            <person name="Allen J.E."/>
            <person name="Bosdet I.E."/>
            <person name="Brent M.R."/>
            <person name="Chiu R."/>
            <person name="Doering T.L."/>
            <person name="Donlin M.J."/>
            <person name="D'Souza C.A."/>
            <person name="Fox D.S."/>
            <person name="Grinberg V."/>
            <person name="Fu J."/>
            <person name="Fukushima M."/>
            <person name="Haas B.J."/>
            <person name="Huang J.C."/>
            <person name="Janbon G."/>
            <person name="Jones S.J.M."/>
            <person name="Koo H.L."/>
            <person name="Krzywinski M.I."/>
            <person name="Kwon-Chung K.J."/>
            <person name="Lengeler K.B."/>
            <person name="Maiti R."/>
            <person name="Marra M.A."/>
            <person name="Marra R.E."/>
            <person name="Mathewson C.A."/>
            <person name="Mitchell T.G."/>
            <person name="Pertea M."/>
            <person name="Riggs F.R."/>
            <person name="Salzberg S.L."/>
            <person name="Schein J.E."/>
            <person name="Shvartsbeyn A."/>
            <person name="Shin H."/>
            <person name="Shumway M."/>
            <person name="Specht C.A."/>
            <person name="Suh B.B."/>
            <person name="Tenney A."/>
            <person name="Utterback T.R."/>
            <person name="Wickes B.L."/>
            <person name="Wortman J.R."/>
            <person name="Wye N.H."/>
            <person name="Kronstad J.W."/>
            <person name="Lodge J.K."/>
            <person name="Heitman J."/>
            <person name="Davis R.W."/>
            <person name="Fraser C.M."/>
            <person name="Hyman R.W."/>
        </authorList>
    </citation>
    <scope>NUCLEOTIDE SEQUENCE [LARGE SCALE GENOMIC DNA]</scope>
    <source>
        <strain>B-3501A</strain>
    </source>
</reference>
<comment type="function">
    <text evidence="1">Responsible for methylating the 5'-cap structure of mRNAs.</text>
</comment>
<comment type="catalytic activity">
    <reaction evidence="2 3">
        <text>a 5'-end (5'-triphosphoguanosine)-ribonucleoside in mRNA + S-adenosyl-L-methionine = a 5'-end (N(7)-methyl 5'-triphosphoguanosine)-ribonucleoside in mRNA + S-adenosyl-L-homocysteine</text>
        <dbReference type="Rhea" id="RHEA:67008"/>
        <dbReference type="Rhea" id="RHEA-COMP:17166"/>
        <dbReference type="Rhea" id="RHEA-COMP:17167"/>
        <dbReference type="ChEBI" id="CHEBI:57856"/>
        <dbReference type="ChEBI" id="CHEBI:59789"/>
        <dbReference type="ChEBI" id="CHEBI:156461"/>
        <dbReference type="ChEBI" id="CHEBI:167617"/>
        <dbReference type="EC" id="2.1.1.56"/>
    </reaction>
</comment>
<comment type="subcellular location">
    <subcellularLocation>
        <location evidence="1">Nucleus</location>
    </subcellularLocation>
</comment>
<comment type="similarity">
    <text evidence="3">Belongs to the class I-like SAM-binding methyltransferase superfamily. mRNA cap 0 methyltransferase family.</text>
</comment>
<feature type="chain" id="PRO_0000410138" description="mRNA cap guanine-N(7) methyltransferase">
    <location>
        <begin position="1"/>
        <end position="700"/>
    </location>
</feature>
<feature type="domain" description="mRNA cap 0 methyltransferase" evidence="3">
    <location>
        <begin position="429"/>
        <end position="700"/>
    </location>
</feature>
<feature type="region of interest" description="Disordered" evidence="4">
    <location>
        <begin position="1"/>
        <end position="263"/>
    </location>
</feature>
<feature type="region of interest" description="Disordered" evidence="4">
    <location>
        <begin position="277"/>
        <end position="392"/>
    </location>
</feature>
<feature type="compositionally biased region" description="Basic and acidic residues" evidence="4">
    <location>
        <begin position="1"/>
        <end position="10"/>
    </location>
</feature>
<feature type="compositionally biased region" description="Basic and acidic residues" evidence="4">
    <location>
        <begin position="52"/>
        <end position="67"/>
    </location>
</feature>
<feature type="compositionally biased region" description="Polar residues" evidence="4">
    <location>
        <begin position="113"/>
        <end position="128"/>
    </location>
</feature>
<feature type="compositionally biased region" description="Low complexity" evidence="4">
    <location>
        <begin position="129"/>
        <end position="144"/>
    </location>
</feature>
<feature type="compositionally biased region" description="Low complexity" evidence="4">
    <location>
        <begin position="220"/>
        <end position="241"/>
    </location>
</feature>
<feature type="binding site" evidence="3">
    <location>
        <begin position="438"/>
        <end position="439"/>
    </location>
    <ligand>
        <name>mRNA</name>
        <dbReference type="ChEBI" id="CHEBI:33699"/>
    </ligand>
    <ligandPart>
        <name>mRNA cap</name>
    </ligandPart>
</feature>
<feature type="binding site" evidence="3">
    <location>
        <position position="442"/>
    </location>
    <ligand>
        <name>S-adenosyl-L-methionine</name>
        <dbReference type="ChEBI" id="CHEBI:59789"/>
    </ligand>
</feature>
<feature type="binding site" evidence="3">
    <location>
        <position position="461"/>
    </location>
    <ligand>
        <name>S-adenosyl-L-methionine</name>
        <dbReference type="ChEBI" id="CHEBI:59789"/>
    </ligand>
</feature>
<feature type="binding site" evidence="3">
    <location>
        <position position="483"/>
    </location>
    <ligand>
        <name>S-adenosyl-L-methionine</name>
        <dbReference type="ChEBI" id="CHEBI:59789"/>
    </ligand>
</feature>
<feature type="binding site" evidence="2">
    <location>
        <position position="512"/>
    </location>
    <ligand>
        <name>S-adenosyl-L-methionine</name>
        <dbReference type="ChEBI" id="CHEBI:59789"/>
    </ligand>
</feature>
<feature type="binding site" evidence="2">
    <location>
        <position position="538"/>
    </location>
    <ligand>
        <name>S-adenosyl-L-methionine</name>
        <dbReference type="ChEBI" id="CHEBI:59789"/>
    </ligand>
</feature>
<feature type="binding site" evidence="2">
    <location>
        <position position="543"/>
    </location>
    <ligand>
        <name>S-adenosyl-L-methionine</name>
        <dbReference type="ChEBI" id="CHEBI:59789"/>
    </ligand>
</feature>
<feature type="site" description="mRNA cap binding" evidence="3">
    <location>
        <position position="464"/>
    </location>
</feature>
<feature type="site" description="mRNA cap binding" evidence="3">
    <location>
        <position position="470"/>
    </location>
</feature>
<feature type="site" description="mRNA cap binding" evidence="3">
    <location>
        <position position="495"/>
    </location>
</feature>
<feature type="site" description="mRNA cap binding" evidence="3">
    <location>
        <position position="542"/>
    </location>
</feature>
<feature type="site" description="mRNA cap binding" evidence="3">
    <location>
        <position position="625"/>
    </location>
</feature>
<feature type="site" description="mRNA cap binding" evidence="3">
    <location>
        <position position="692"/>
    </location>
</feature>
<evidence type="ECO:0000250" key="1"/>
<evidence type="ECO:0000250" key="2">
    <source>
        <dbReference type="UniProtKB" id="O43148"/>
    </source>
</evidence>
<evidence type="ECO:0000255" key="3">
    <source>
        <dbReference type="PROSITE-ProRule" id="PRU00895"/>
    </source>
</evidence>
<evidence type="ECO:0000256" key="4">
    <source>
        <dbReference type="SAM" id="MobiDB-lite"/>
    </source>
</evidence>
<keyword id="KW-0489">Methyltransferase</keyword>
<keyword id="KW-0506">mRNA capping</keyword>
<keyword id="KW-0507">mRNA processing</keyword>
<keyword id="KW-0539">Nucleus</keyword>
<keyword id="KW-0694">RNA-binding</keyword>
<keyword id="KW-0949">S-adenosyl-L-methionine</keyword>
<keyword id="KW-0808">Transferase</keyword>
<sequence length="700" mass="77858">MVYDPIRDCDVPAPHISAPPLSRSRSPPPPHRTPSASGSLRGLLNDSPPPREPPRAASVHEDAESHRPKLSNILNDAEPPRQRSMLPPQQPIHAELEHGRRTSAGSHAAQLARSPSMSLSPRSQNQSLPYPSSRPGSAAGSAHPFGYDPRQGTLSPVLSARRTSEDQPRPTSSSSASGRRYTEPASQTPAPAPLGSSAYRPRHTSTPGNPSSAYAPRFTPQPTTTPSSPSTSQHTPYTPHHSAPPRILHYNPHRQSAPSSVLRPIYPDEVAHLRQLAHANNPLRQKPAARRYSYSGGRAPEPTPTPRTSLPGENDHSYFPPQWDDRPSMPPSEVSYGGPPSSTPGAPPSGYSQYPPNWEAQTPGGNWNGERPGRLGKRRARDEEDDEYERNKRVVSGPVAGQAYSKKVTVVAEHYNSRPEVGVERREFSPIIGLKKFNNWIKSVLIGKFAYRPRGKVLDVGCGKGGDLNKWKQARIALYVGLDVADQSVQQAADRYRRMPKPGFDAFFYAHDCFSNPLSDVLSPELQIKDLYDNVTMQFCMHYAFENAAKARMMIENVSRYLRRGGIFIGTIPNAELLLQLPDRDEELRFGNSCYSIQFTERRHKGVYGHDYRFYLTDAVEDVPEYLVDWENFVSLASESGLRLVYKKAFHEILQEEKDSRDFGPLLGKMGVLNEYGESAMDADQWEAANLYMGFAFEKM</sequence>